<feature type="chain" id="PRO_0000291321" description="Ribosome hibernation promotion factor">
    <location>
        <begin position="1"/>
        <end position="189"/>
    </location>
</feature>
<comment type="function">
    <text evidence="1">Required for dimerization of active 70S ribosomes into 100S ribosomes in stationary phase; 100S ribosomes are translationally inactive and sometimes present during exponential growth.</text>
</comment>
<comment type="subunit">
    <text evidence="1">Interacts with 100S ribosomes.</text>
</comment>
<comment type="subcellular location">
    <subcellularLocation>
        <location evidence="1">Cytoplasm</location>
    </subcellularLocation>
</comment>
<comment type="similarity">
    <text evidence="1">Belongs to the HPF/YfiA ribosome-associated protein family. Long HPF subfamily.</text>
</comment>
<reference key="1">
    <citation type="journal article" date="2003" name="Mol. Microbiol.">
        <title>Genome-based analysis of virulence genes in a non-biofilm-forming Staphylococcus epidermidis strain (ATCC 12228).</title>
        <authorList>
            <person name="Zhang Y.-Q."/>
            <person name="Ren S.-X."/>
            <person name="Li H.-L."/>
            <person name="Wang Y.-X."/>
            <person name="Fu G."/>
            <person name="Yang J."/>
            <person name="Qin Z.-Q."/>
            <person name="Miao Y.-G."/>
            <person name="Wang W.-Y."/>
            <person name="Chen R.-S."/>
            <person name="Shen Y."/>
            <person name="Chen Z."/>
            <person name="Yuan Z.-H."/>
            <person name="Zhao G.-P."/>
            <person name="Qu D."/>
            <person name="Danchin A."/>
            <person name="Wen Y.-M."/>
        </authorList>
    </citation>
    <scope>NUCLEOTIDE SEQUENCE [LARGE SCALE GENOMIC DNA]</scope>
    <source>
        <strain>ATCC 12228 / FDA PCI 1200</strain>
    </source>
</reference>
<gene>
    <name evidence="1" type="primary">hpf</name>
    <name type="ordered locus">SE_0534</name>
</gene>
<dbReference type="EMBL" id="AE015929">
    <property type="protein sequence ID" value="AAO04131.1"/>
    <property type="molecule type" value="Genomic_DNA"/>
</dbReference>
<dbReference type="RefSeq" id="NP_764089.1">
    <property type="nucleotide sequence ID" value="NC_004461.1"/>
</dbReference>
<dbReference type="RefSeq" id="WP_001829676.1">
    <property type="nucleotide sequence ID" value="NZ_WBME01000015.1"/>
</dbReference>
<dbReference type="SMR" id="Q8CTF2"/>
<dbReference type="KEGG" id="sep:SE_0534"/>
<dbReference type="PATRIC" id="fig|176280.10.peg.506"/>
<dbReference type="eggNOG" id="COG1544">
    <property type="taxonomic scope" value="Bacteria"/>
</dbReference>
<dbReference type="HOGENOM" id="CLU_071472_0_3_9"/>
<dbReference type="OrthoDB" id="9794975at2"/>
<dbReference type="Proteomes" id="UP000001411">
    <property type="component" value="Chromosome"/>
</dbReference>
<dbReference type="GO" id="GO:0022627">
    <property type="term" value="C:cytosolic small ribosomal subunit"/>
    <property type="evidence" value="ECO:0007669"/>
    <property type="project" value="TreeGrafter"/>
</dbReference>
<dbReference type="GO" id="GO:0043024">
    <property type="term" value="F:ribosomal small subunit binding"/>
    <property type="evidence" value="ECO:0007669"/>
    <property type="project" value="TreeGrafter"/>
</dbReference>
<dbReference type="GO" id="GO:0045900">
    <property type="term" value="P:negative regulation of translational elongation"/>
    <property type="evidence" value="ECO:0007669"/>
    <property type="project" value="TreeGrafter"/>
</dbReference>
<dbReference type="CDD" id="cd00552">
    <property type="entry name" value="RaiA"/>
    <property type="match status" value="1"/>
</dbReference>
<dbReference type="FunFam" id="3.30.160.100:FF:000003">
    <property type="entry name" value="Ribosome hibernation promoting factor"/>
    <property type="match status" value="1"/>
</dbReference>
<dbReference type="FunFam" id="3.30.505.50:FF:000001">
    <property type="entry name" value="Ribosome hibernation promoting factor"/>
    <property type="match status" value="1"/>
</dbReference>
<dbReference type="Gene3D" id="3.30.160.100">
    <property type="entry name" value="Ribosome hibernation promotion factor-like"/>
    <property type="match status" value="1"/>
</dbReference>
<dbReference type="Gene3D" id="3.30.505.50">
    <property type="entry name" value="Sigma 54 modulation/S30EA ribosomal protein, C-terminal domain"/>
    <property type="match status" value="1"/>
</dbReference>
<dbReference type="HAMAP" id="MF_00839">
    <property type="entry name" value="HPF"/>
    <property type="match status" value="1"/>
</dbReference>
<dbReference type="InterPro" id="IPR050574">
    <property type="entry name" value="HPF/YfiA_ribosome-assoc"/>
</dbReference>
<dbReference type="InterPro" id="IPR034694">
    <property type="entry name" value="HPF_long/plastid"/>
</dbReference>
<dbReference type="InterPro" id="IPR036567">
    <property type="entry name" value="RHF-like"/>
</dbReference>
<dbReference type="InterPro" id="IPR003489">
    <property type="entry name" value="RHF/RaiA"/>
</dbReference>
<dbReference type="InterPro" id="IPR032528">
    <property type="entry name" value="Ribosom_S30AE_C"/>
</dbReference>
<dbReference type="InterPro" id="IPR038416">
    <property type="entry name" value="Ribosom_S30AE_C_sf"/>
</dbReference>
<dbReference type="NCBIfam" id="TIGR00741">
    <property type="entry name" value="yfiA"/>
    <property type="match status" value="1"/>
</dbReference>
<dbReference type="PANTHER" id="PTHR33231">
    <property type="entry name" value="30S RIBOSOMAL PROTEIN"/>
    <property type="match status" value="1"/>
</dbReference>
<dbReference type="PANTHER" id="PTHR33231:SF1">
    <property type="entry name" value="30S RIBOSOMAL PROTEIN"/>
    <property type="match status" value="1"/>
</dbReference>
<dbReference type="Pfam" id="PF16321">
    <property type="entry name" value="Ribosom_S30AE_C"/>
    <property type="match status" value="1"/>
</dbReference>
<dbReference type="Pfam" id="PF02482">
    <property type="entry name" value="Ribosomal_S30AE"/>
    <property type="match status" value="1"/>
</dbReference>
<dbReference type="SUPFAM" id="SSF69754">
    <property type="entry name" value="Ribosome binding protein Y (YfiA homologue)"/>
    <property type="match status" value="1"/>
</dbReference>
<protein>
    <recommendedName>
        <fullName evidence="1">Ribosome hibernation promotion factor</fullName>
        <shortName evidence="1">HPF</shortName>
    </recommendedName>
</protein>
<organism>
    <name type="scientific">Staphylococcus epidermidis (strain ATCC 12228 / FDA PCI 1200)</name>
    <dbReference type="NCBI Taxonomy" id="176280"/>
    <lineage>
        <taxon>Bacteria</taxon>
        <taxon>Bacillati</taxon>
        <taxon>Bacillota</taxon>
        <taxon>Bacilli</taxon>
        <taxon>Bacillales</taxon>
        <taxon>Staphylococcaceae</taxon>
        <taxon>Staphylococcus</taxon>
    </lineage>
</organism>
<sequence>MIRFEIHGDNLTITDAIRNYIEEKVGKLERYFNNVPNAVAHVRVKTYSNSTTKIEVTIPLKDVTLRAEERHDDLYAGIDLITNKLERQVRKYKTRVNRKHRDRGDQDIFVAEVQESTTNNHADDIESENDIEIIRSKQFSLKPMDSEEAVLQMNLLGHDFFIFTDRETDGTSIVYRRKDGKYGLIETTE</sequence>
<accession>Q8CTF2</accession>
<proteinExistence type="inferred from homology"/>
<evidence type="ECO:0000255" key="1">
    <source>
        <dbReference type="HAMAP-Rule" id="MF_00839"/>
    </source>
</evidence>
<name>HPF_STAES</name>
<keyword id="KW-0963">Cytoplasm</keyword>
<keyword id="KW-0810">Translation regulation</keyword>